<reference key="1">
    <citation type="journal article" date="2006" name="Proc. Natl. Acad. Sci. U.S.A.">
        <title>Comparative genomics of the lactic acid bacteria.</title>
        <authorList>
            <person name="Makarova K.S."/>
            <person name="Slesarev A."/>
            <person name="Wolf Y.I."/>
            <person name="Sorokin A."/>
            <person name="Mirkin B."/>
            <person name="Koonin E.V."/>
            <person name="Pavlov A."/>
            <person name="Pavlova N."/>
            <person name="Karamychev V."/>
            <person name="Polouchine N."/>
            <person name="Shakhova V."/>
            <person name="Grigoriev I."/>
            <person name="Lou Y."/>
            <person name="Rohksar D."/>
            <person name="Lucas S."/>
            <person name="Huang K."/>
            <person name="Goodstein D.M."/>
            <person name="Hawkins T."/>
            <person name="Plengvidhya V."/>
            <person name="Welker D."/>
            <person name="Hughes J."/>
            <person name="Goh Y."/>
            <person name="Benson A."/>
            <person name="Baldwin K."/>
            <person name="Lee J.-H."/>
            <person name="Diaz-Muniz I."/>
            <person name="Dosti B."/>
            <person name="Smeianov V."/>
            <person name="Wechter W."/>
            <person name="Barabote R."/>
            <person name="Lorca G."/>
            <person name="Altermann E."/>
            <person name="Barrangou R."/>
            <person name="Ganesan B."/>
            <person name="Xie Y."/>
            <person name="Rawsthorne H."/>
            <person name="Tamir D."/>
            <person name="Parker C."/>
            <person name="Breidt F."/>
            <person name="Broadbent J.R."/>
            <person name="Hutkins R."/>
            <person name="O'Sullivan D."/>
            <person name="Steele J."/>
            <person name="Unlu G."/>
            <person name="Saier M.H. Jr."/>
            <person name="Klaenhammer T."/>
            <person name="Richardson P."/>
            <person name="Kozyavkin S."/>
            <person name="Weimer B.C."/>
            <person name="Mills D.A."/>
        </authorList>
    </citation>
    <scope>NUCLEOTIDE SEQUENCE [LARGE SCALE GENOMIC DNA]</scope>
    <source>
        <strain>ATCC 334 / BCRC 17002 / CCUG 31169 / CIP 107868 / KCTC 3260 / NRRL B-441</strain>
    </source>
</reference>
<protein>
    <recommendedName>
        <fullName evidence="1">Probable tRNA sulfurtransferase</fullName>
        <ecNumber evidence="1">2.8.1.4</ecNumber>
    </recommendedName>
    <alternativeName>
        <fullName evidence="1">Sulfur carrier protein ThiS sulfurtransferase</fullName>
    </alternativeName>
    <alternativeName>
        <fullName evidence="1">Thiamine biosynthesis protein ThiI</fullName>
    </alternativeName>
    <alternativeName>
        <fullName evidence="1">tRNA 4-thiouridine synthase</fullName>
    </alternativeName>
</protein>
<proteinExistence type="inferred from homology"/>
<organism>
    <name type="scientific">Lacticaseibacillus paracasei (strain ATCC 334 / BCRC 17002 / CCUG 31169 / CIP 107868 / KCTC 3260 / NRRL B-441)</name>
    <name type="common">Lactobacillus paracasei</name>
    <dbReference type="NCBI Taxonomy" id="321967"/>
    <lineage>
        <taxon>Bacteria</taxon>
        <taxon>Bacillati</taxon>
        <taxon>Bacillota</taxon>
        <taxon>Bacilli</taxon>
        <taxon>Lactobacillales</taxon>
        <taxon>Lactobacillaceae</taxon>
        <taxon>Lacticaseibacillus</taxon>
    </lineage>
</organism>
<sequence>MQYSEIMVRYGELSTKGKNRQAFIGRLNGNVTRALHEFPNLTIRPKRDRMHIELNGEPSDQVMARLSQVFGIQNFSPSIAVEKDMDKVHAVALQLMNETAPKGISYKVNTRRSDHDFALDTNAMNLDLGDYLTDKRPDLVVKMHQPDMILRVEVRREAIYLSTKTIQGAGGLPVGTAGKAALMLSGGIDSPVAGYYALKRGVDIEMVHFFSPPYTSQQALNKAKQLTAKLTPYVGRIYFIEVPFTEIQEEIKAKVPEGYLMTVQRRLMLRLTEAIAQQRGDLAIFNGESVGQVASQTLESMAAINDVTTMPIIRPVATMDKNEIIAEAEKIDTYDLSIMPFEDCCTIFAPPSPKTKPKTDRARYYESKIDVAGLMDRALAGVKIQEIKSSDQFMNQDQDVIAELL</sequence>
<comment type="function">
    <text evidence="1">Catalyzes the ATP-dependent transfer of a sulfur to tRNA to produce 4-thiouridine in position 8 of tRNAs, which functions as a near-UV photosensor. Also catalyzes the transfer of sulfur to the sulfur carrier protein ThiS, forming ThiS-thiocarboxylate. This is a step in the synthesis of thiazole, in the thiamine biosynthesis pathway. The sulfur is donated as persulfide by IscS.</text>
</comment>
<comment type="catalytic activity">
    <reaction evidence="1">
        <text>[ThiI sulfur-carrier protein]-S-sulfanyl-L-cysteine + a uridine in tRNA + 2 reduced [2Fe-2S]-[ferredoxin] + ATP + H(+) = [ThiI sulfur-carrier protein]-L-cysteine + a 4-thiouridine in tRNA + 2 oxidized [2Fe-2S]-[ferredoxin] + AMP + diphosphate</text>
        <dbReference type="Rhea" id="RHEA:24176"/>
        <dbReference type="Rhea" id="RHEA-COMP:10000"/>
        <dbReference type="Rhea" id="RHEA-COMP:10001"/>
        <dbReference type="Rhea" id="RHEA-COMP:13337"/>
        <dbReference type="Rhea" id="RHEA-COMP:13338"/>
        <dbReference type="Rhea" id="RHEA-COMP:13339"/>
        <dbReference type="Rhea" id="RHEA-COMP:13340"/>
        <dbReference type="ChEBI" id="CHEBI:15378"/>
        <dbReference type="ChEBI" id="CHEBI:29950"/>
        <dbReference type="ChEBI" id="CHEBI:30616"/>
        <dbReference type="ChEBI" id="CHEBI:33019"/>
        <dbReference type="ChEBI" id="CHEBI:33737"/>
        <dbReference type="ChEBI" id="CHEBI:33738"/>
        <dbReference type="ChEBI" id="CHEBI:61963"/>
        <dbReference type="ChEBI" id="CHEBI:65315"/>
        <dbReference type="ChEBI" id="CHEBI:136798"/>
        <dbReference type="ChEBI" id="CHEBI:456215"/>
        <dbReference type="EC" id="2.8.1.4"/>
    </reaction>
</comment>
<comment type="catalytic activity">
    <reaction evidence="1">
        <text>[ThiS sulfur-carrier protein]-C-terminal Gly-Gly-AMP + S-sulfanyl-L-cysteinyl-[cysteine desulfurase] + AH2 = [ThiS sulfur-carrier protein]-C-terminal-Gly-aminoethanethioate + L-cysteinyl-[cysteine desulfurase] + A + AMP + 2 H(+)</text>
        <dbReference type="Rhea" id="RHEA:43340"/>
        <dbReference type="Rhea" id="RHEA-COMP:12157"/>
        <dbReference type="Rhea" id="RHEA-COMP:12158"/>
        <dbReference type="Rhea" id="RHEA-COMP:12910"/>
        <dbReference type="Rhea" id="RHEA-COMP:19908"/>
        <dbReference type="ChEBI" id="CHEBI:13193"/>
        <dbReference type="ChEBI" id="CHEBI:15378"/>
        <dbReference type="ChEBI" id="CHEBI:17499"/>
        <dbReference type="ChEBI" id="CHEBI:29950"/>
        <dbReference type="ChEBI" id="CHEBI:61963"/>
        <dbReference type="ChEBI" id="CHEBI:90618"/>
        <dbReference type="ChEBI" id="CHEBI:232372"/>
        <dbReference type="ChEBI" id="CHEBI:456215"/>
    </reaction>
</comment>
<comment type="pathway">
    <text evidence="1">Cofactor biosynthesis; thiamine diphosphate biosynthesis.</text>
</comment>
<comment type="subcellular location">
    <subcellularLocation>
        <location evidence="1">Cytoplasm</location>
    </subcellularLocation>
</comment>
<comment type="similarity">
    <text evidence="1">Belongs to the ThiI family.</text>
</comment>
<evidence type="ECO:0000255" key="1">
    <source>
        <dbReference type="HAMAP-Rule" id="MF_00021"/>
    </source>
</evidence>
<feature type="chain" id="PRO_1000074234" description="Probable tRNA sulfurtransferase">
    <location>
        <begin position="1"/>
        <end position="405"/>
    </location>
</feature>
<feature type="domain" description="THUMP" evidence="1">
    <location>
        <begin position="60"/>
        <end position="165"/>
    </location>
</feature>
<feature type="binding site" evidence="1">
    <location>
        <begin position="183"/>
        <end position="184"/>
    </location>
    <ligand>
        <name>ATP</name>
        <dbReference type="ChEBI" id="CHEBI:30616"/>
    </ligand>
</feature>
<feature type="binding site" evidence="1">
    <location>
        <begin position="208"/>
        <end position="209"/>
    </location>
    <ligand>
        <name>ATP</name>
        <dbReference type="ChEBI" id="CHEBI:30616"/>
    </ligand>
</feature>
<feature type="binding site" evidence="1">
    <location>
        <position position="265"/>
    </location>
    <ligand>
        <name>ATP</name>
        <dbReference type="ChEBI" id="CHEBI:30616"/>
    </ligand>
</feature>
<feature type="binding site" evidence="1">
    <location>
        <position position="287"/>
    </location>
    <ligand>
        <name>ATP</name>
        <dbReference type="ChEBI" id="CHEBI:30616"/>
    </ligand>
</feature>
<feature type="binding site" evidence="1">
    <location>
        <position position="296"/>
    </location>
    <ligand>
        <name>ATP</name>
        <dbReference type="ChEBI" id="CHEBI:30616"/>
    </ligand>
</feature>
<accession>Q039U0</accession>
<gene>
    <name evidence="1" type="primary">thiI</name>
    <name type="ordered locus">LSEI_1248</name>
</gene>
<name>THII_LACP3</name>
<keyword id="KW-0067">ATP-binding</keyword>
<keyword id="KW-0963">Cytoplasm</keyword>
<keyword id="KW-0547">Nucleotide-binding</keyword>
<keyword id="KW-1185">Reference proteome</keyword>
<keyword id="KW-0694">RNA-binding</keyword>
<keyword id="KW-0784">Thiamine biosynthesis</keyword>
<keyword id="KW-0808">Transferase</keyword>
<keyword id="KW-0820">tRNA-binding</keyword>
<dbReference type="EC" id="2.8.1.4" evidence="1"/>
<dbReference type="EMBL" id="CP000423">
    <property type="protein sequence ID" value="ABJ70032.1"/>
    <property type="molecule type" value="Genomic_DNA"/>
</dbReference>
<dbReference type="RefSeq" id="WP_003574836.1">
    <property type="nucleotide sequence ID" value="NC_008526.1"/>
</dbReference>
<dbReference type="RefSeq" id="YP_806474.1">
    <property type="nucleotide sequence ID" value="NC_008526.1"/>
</dbReference>
<dbReference type="SMR" id="Q039U0"/>
<dbReference type="STRING" id="321967.LSEI_1248"/>
<dbReference type="PaxDb" id="321967-LSEI_1248"/>
<dbReference type="KEGG" id="lca:LSEI_1248"/>
<dbReference type="PATRIC" id="fig|321967.11.peg.1222"/>
<dbReference type="HOGENOM" id="CLU_037952_4_0_9"/>
<dbReference type="UniPathway" id="UPA00060"/>
<dbReference type="Proteomes" id="UP000001651">
    <property type="component" value="Chromosome"/>
</dbReference>
<dbReference type="GO" id="GO:0005829">
    <property type="term" value="C:cytosol"/>
    <property type="evidence" value="ECO:0007669"/>
    <property type="project" value="TreeGrafter"/>
</dbReference>
<dbReference type="GO" id="GO:0005524">
    <property type="term" value="F:ATP binding"/>
    <property type="evidence" value="ECO:0007669"/>
    <property type="project" value="UniProtKB-UniRule"/>
</dbReference>
<dbReference type="GO" id="GO:0004810">
    <property type="term" value="F:CCA tRNA nucleotidyltransferase activity"/>
    <property type="evidence" value="ECO:0007669"/>
    <property type="project" value="InterPro"/>
</dbReference>
<dbReference type="GO" id="GO:0000049">
    <property type="term" value="F:tRNA binding"/>
    <property type="evidence" value="ECO:0007669"/>
    <property type="project" value="UniProtKB-UniRule"/>
</dbReference>
<dbReference type="GO" id="GO:0140741">
    <property type="term" value="F:tRNA-uracil-4 sulfurtransferase activity"/>
    <property type="evidence" value="ECO:0007669"/>
    <property type="project" value="UniProtKB-EC"/>
</dbReference>
<dbReference type="GO" id="GO:0009228">
    <property type="term" value="P:thiamine biosynthetic process"/>
    <property type="evidence" value="ECO:0007669"/>
    <property type="project" value="UniProtKB-KW"/>
</dbReference>
<dbReference type="GO" id="GO:0009229">
    <property type="term" value="P:thiamine diphosphate biosynthetic process"/>
    <property type="evidence" value="ECO:0007669"/>
    <property type="project" value="UniProtKB-UniRule"/>
</dbReference>
<dbReference type="GO" id="GO:0052837">
    <property type="term" value="P:thiazole biosynthetic process"/>
    <property type="evidence" value="ECO:0007669"/>
    <property type="project" value="TreeGrafter"/>
</dbReference>
<dbReference type="GO" id="GO:0002937">
    <property type="term" value="P:tRNA 4-thiouridine biosynthesis"/>
    <property type="evidence" value="ECO:0007669"/>
    <property type="project" value="TreeGrafter"/>
</dbReference>
<dbReference type="CDD" id="cd01712">
    <property type="entry name" value="PPase_ThiI"/>
    <property type="match status" value="1"/>
</dbReference>
<dbReference type="CDD" id="cd11716">
    <property type="entry name" value="THUMP_ThiI"/>
    <property type="match status" value="1"/>
</dbReference>
<dbReference type="FunFam" id="3.40.50.620:FF:000053">
    <property type="entry name" value="Probable tRNA sulfurtransferase"/>
    <property type="match status" value="1"/>
</dbReference>
<dbReference type="Gene3D" id="3.30.2130.30">
    <property type="match status" value="1"/>
</dbReference>
<dbReference type="Gene3D" id="3.40.50.620">
    <property type="entry name" value="HUPs"/>
    <property type="match status" value="1"/>
</dbReference>
<dbReference type="HAMAP" id="MF_00021">
    <property type="entry name" value="ThiI"/>
    <property type="match status" value="1"/>
</dbReference>
<dbReference type="InterPro" id="IPR014729">
    <property type="entry name" value="Rossmann-like_a/b/a_fold"/>
</dbReference>
<dbReference type="InterPro" id="IPR020536">
    <property type="entry name" value="ThiI_AANH"/>
</dbReference>
<dbReference type="InterPro" id="IPR054173">
    <property type="entry name" value="ThiI_fer"/>
</dbReference>
<dbReference type="InterPro" id="IPR049961">
    <property type="entry name" value="ThiI_N"/>
</dbReference>
<dbReference type="InterPro" id="IPR004114">
    <property type="entry name" value="THUMP_dom"/>
</dbReference>
<dbReference type="InterPro" id="IPR049962">
    <property type="entry name" value="THUMP_ThiI"/>
</dbReference>
<dbReference type="InterPro" id="IPR003720">
    <property type="entry name" value="tRNA_STrfase"/>
</dbReference>
<dbReference type="InterPro" id="IPR050102">
    <property type="entry name" value="tRNA_sulfurtransferase_ThiI"/>
</dbReference>
<dbReference type="NCBIfam" id="TIGR00342">
    <property type="entry name" value="tRNA uracil 4-sulfurtransferase ThiI"/>
    <property type="match status" value="1"/>
</dbReference>
<dbReference type="PANTHER" id="PTHR43209">
    <property type="entry name" value="TRNA SULFURTRANSFERASE"/>
    <property type="match status" value="1"/>
</dbReference>
<dbReference type="PANTHER" id="PTHR43209:SF1">
    <property type="entry name" value="TRNA SULFURTRANSFERASE"/>
    <property type="match status" value="1"/>
</dbReference>
<dbReference type="Pfam" id="PF02568">
    <property type="entry name" value="ThiI"/>
    <property type="match status" value="1"/>
</dbReference>
<dbReference type="Pfam" id="PF22025">
    <property type="entry name" value="ThiI_fer"/>
    <property type="match status" value="1"/>
</dbReference>
<dbReference type="Pfam" id="PF02926">
    <property type="entry name" value="THUMP"/>
    <property type="match status" value="1"/>
</dbReference>
<dbReference type="SMART" id="SM00981">
    <property type="entry name" value="THUMP"/>
    <property type="match status" value="1"/>
</dbReference>
<dbReference type="SUPFAM" id="SSF52402">
    <property type="entry name" value="Adenine nucleotide alpha hydrolases-like"/>
    <property type="match status" value="1"/>
</dbReference>
<dbReference type="SUPFAM" id="SSF143437">
    <property type="entry name" value="THUMP domain-like"/>
    <property type="match status" value="1"/>
</dbReference>
<dbReference type="PROSITE" id="PS51165">
    <property type="entry name" value="THUMP"/>
    <property type="match status" value="1"/>
</dbReference>